<gene>
    <name evidence="1" type="primary">uppP</name>
    <name type="ordered locus">PGN_0571</name>
</gene>
<organism>
    <name type="scientific">Porphyromonas gingivalis (strain ATCC 33277 / DSM 20709 / CIP 103683 / JCM 12257 / NCTC 11834 / 2561)</name>
    <dbReference type="NCBI Taxonomy" id="431947"/>
    <lineage>
        <taxon>Bacteria</taxon>
        <taxon>Pseudomonadati</taxon>
        <taxon>Bacteroidota</taxon>
        <taxon>Bacteroidia</taxon>
        <taxon>Bacteroidales</taxon>
        <taxon>Porphyromonadaceae</taxon>
        <taxon>Porphyromonas</taxon>
    </lineage>
</organism>
<protein>
    <recommendedName>
        <fullName evidence="1">Undecaprenyl-diphosphatase</fullName>
        <ecNumber evidence="1">3.6.1.27</ecNumber>
    </recommendedName>
    <alternativeName>
        <fullName evidence="1">Bacitracin resistance protein</fullName>
    </alternativeName>
    <alternativeName>
        <fullName evidence="1">Undecaprenyl pyrophosphate phosphatase</fullName>
    </alternativeName>
</protein>
<comment type="function">
    <text evidence="1">Catalyzes the dephosphorylation of undecaprenyl diphosphate (UPP). Confers resistance to bacitracin.</text>
</comment>
<comment type="catalytic activity">
    <reaction evidence="1">
        <text>di-trans,octa-cis-undecaprenyl diphosphate + H2O = di-trans,octa-cis-undecaprenyl phosphate + phosphate + H(+)</text>
        <dbReference type="Rhea" id="RHEA:28094"/>
        <dbReference type="ChEBI" id="CHEBI:15377"/>
        <dbReference type="ChEBI" id="CHEBI:15378"/>
        <dbReference type="ChEBI" id="CHEBI:43474"/>
        <dbReference type="ChEBI" id="CHEBI:58405"/>
        <dbReference type="ChEBI" id="CHEBI:60392"/>
        <dbReference type="EC" id="3.6.1.27"/>
    </reaction>
</comment>
<comment type="subcellular location">
    <subcellularLocation>
        <location evidence="1">Cell inner membrane</location>
        <topology evidence="1">Multi-pass membrane protein</topology>
    </subcellularLocation>
</comment>
<comment type="miscellaneous">
    <text>Bacitracin is thought to be involved in the inhibition of peptidoglycan synthesis by sequestering undecaprenyl diphosphate, thereby reducing the pool of lipid carrier available.</text>
</comment>
<comment type="similarity">
    <text evidence="1">Belongs to the UppP family.</text>
</comment>
<keyword id="KW-0046">Antibiotic resistance</keyword>
<keyword id="KW-0997">Cell inner membrane</keyword>
<keyword id="KW-1003">Cell membrane</keyword>
<keyword id="KW-0133">Cell shape</keyword>
<keyword id="KW-0961">Cell wall biogenesis/degradation</keyword>
<keyword id="KW-0378">Hydrolase</keyword>
<keyword id="KW-0472">Membrane</keyword>
<keyword id="KW-0573">Peptidoglycan synthesis</keyword>
<keyword id="KW-0812">Transmembrane</keyword>
<keyword id="KW-1133">Transmembrane helix</keyword>
<name>UPPP_PORG3</name>
<evidence type="ECO:0000255" key="1">
    <source>
        <dbReference type="HAMAP-Rule" id="MF_01006"/>
    </source>
</evidence>
<dbReference type="EC" id="3.6.1.27" evidence="1"/>
<dbReference type="EMBL" id="AP009380">
    <property type="protein sequence ID" value="BAG33090.1"/>
    <property type="molecule type" value="Genomic_DNA"/>
</dbReference>
<dbReference type="RefSeq" id="WP_012457608.1">
    <property type="nucleotide sequence ID" value="NC_010729.1"/>
</dbReference>
<dbReference type="SMR" id="B2RI95"/>
<dbReference type="GeneID" id="29255796"/>
<dbReference type="KEGG" id="pgn:PGN_0571"/>
<dbReference type="eggNOG" id="COG1968">
    <property type="taxonomic scope" value="Bacteria"/>
</dbReference>
<dbReference type="HOGENOM" id="CLU_060296_2_0_10"/>
<dbReference type="OrthoDB" id="9808289at2"/>
<dbReference type="BioCyc" id="PGIN431947:G1G2V-613-MONOMER"/>
<dbReference type="Proteomes" id="UP000008842">
    <property type="component" value="Chromosome"/>
</dbReference>
<dbReference type="GO" id="GO:0005886">
    <property type="term" value="C:plasma membrane"/>
    <property type="evidence" value="ECO:0007669"/>
    <property type="project" value="UniProtKB-SubCell"/>
</dbReference>
<dbReference type="GO" id="GO:0050380">
    <property type="term" value="F:undecaprenyl-diphosphatase activity"/>
    <property type="evidence" value="ECO:0007669"/>
    <property type="project" value="UniProtKB-UniRule"/>
</dbReference>
<dbReference type="GO" id="GO:0071555">
    <property type="term" value="P:cell wall organization"/>
    <property type="evidence" value="ECO:0007669"/>
    <property type="project" value="UniProtKB-KW"/>
</dbReference>
<dbReference type="GO" id="GO:0009252">
    <property type="term" value="P:peptidoglycan biosynthetic process"/>
    <property type="evidence" value="ECO:0007669"/>
    <property type="project" value="UniProtKB-KW"/>
</dbReference>
<dbReference type="GO" id="GO:0008360">
    <property type="term" value="P:regulation of cell shape"/>
    <property type="evidence" value="ECO:0007669"/>
    <property type="project" value="UniProtKB-KW"/>
</dbReference>
<dbReference type="GO" id="GO:0046677">
    <property type="term" value="P:response to antibiotic"/>
    <property type="evidence" value="ECO:0007669"/>
    <property type="project" value="UniProtKB-UniRule"/>
</dbReference>
<dbReference type="HAMAP" id="MF_01006">
    <property type="entry name" value="Undec_diphosphatase"/>
    <property type="match status" value="1"/>
</dbReference>
<dbReference type="InterPro" id="IPR003824">
    <property type="entry name" value="UppP"/>
</dbReference>
<dbReference type="NCBIfam" id="NF001390">
    <property type="entry name" value="PRK00281.1-4"/>
    <property type="match status" value="1"/>
</dbReference>
<dbReference type="NCBIfam" id="TIGR00753">
    <property type="entry name" value="undec_PP_bacA"/>
    <property type="match status" value="1"/>
</dbReference>
<dbReference type="PANTHER" id="PTHR30622">
    <property type="entry name" value="UNDECAPRENYL-DIPHOSPHATASE"/>
    <property type="match status" value="1"/>
</dbReference>
<dbReference type="PANTHER" id="PTHR30622:SF3">
    <property type="entry name" value="UNDECAPRENYL-DIPHOSPHATASE"/>
    <property type="match status" value="1"/>
</dbReference>
<dbReference type="Pfam" id="PF02673">
    <property type="entry name" value="BacA"/>
    <property type="match status" value="1"/>
</dbReference>
<accession>B2RI95</accession>
<proteinExistence type="inferred from homology"/>
<sequence length="280" mass="30863">MTILQAIVLAIVEGLTEFLPVSSTGHMIIAEGIMGVESTSFVRAFTVMIQFGAILSVLVLYRKRFFCFPVAPRALGQGKGKEFMSRFDLYWKLLIALVPAVILGFLFEDWVDRMLGSVWVVAVVLFLGGIFMLFVDKLFASSDRGEITYPKAFVIGLFQCLAIFLPGLSRSMATIVGGQQQKLSRKAAAEFSFFLAVPTMLGATLLKAYKLYKEGGIEIFREHMIVLLVGNIVAFIVALAAIKFFIGFLTRYGFKAFGYYRILVGGLLIVLMLSGVSLAV</sequence>
<reference key="1">
    <citation type="journal article" date="2008" name="DNA Res.">
        <title>Determination of the genome sequence of Porphyromonas gingivalis strain ATCC 33277 and genomic comparison with strain W83 revealed extensive genome rearrangements in P. gingivalis.</title>
        <authorList>
            <person name="Naito M."/>
            <person name="Hirakawa H."/>
            <person name="Yamashita A."/>
            <person name="Ohara N."/>
            <person name="Shoji M."/>
            <person name="Yukitake H."/>
            <person name="Nakayama K."/>
            <person name="Toh H."/>
            <person name="Yoshimura F."/>
            <person name="Kuhara S."/>
            <person name="Hattori M."/>
            <person name="Hayashi T."/>
            <person name="Nakayama K."/>
        </authorList>
    </citation>
    <scope>NUCLEOTIDE SEQUENCE [LARGE SCALE GENOMIC DNA]</scope>
    <source>
        <strain>ATCC 33277 / DSM 20709 / CIP 103683 / JCM 12257 / NCTC 11834 / 2561</strain>
    </source>
</reference>
<feature type="chain" id="PRO_1000197389" description="Undecaprenyl-diphosphatase">
    <location>
        <begin position="1"/>
        <end position="280"/>
    </location>
</feature>
<feature type="transmembrane region" description="Helical" evidence="1">
    <location>
        <begin position="1"/>
        <end position="21"/>
    </location>
</feature>
<feature type="transmembrane region" description="Helical" evidence="1">
    <location>
        <begin position="41"/>
        <end position="61"/>
    </location>
</feature>
<feature type="transmembrane region" description="Helical" evidence="1">
    <location>
        <begin position="87"/>
        <end position="107"/>
    </location>
</feature>
<feature type="transmembrane region" description="Helical" evidence="1">
    <location>
        <begin position="115"/>
        <end position="135"/>
    </location>
</feature>
<feature type="transmembrane region" description="Helical" evidence="1">
    <location>
        <begin position="147"/>
        <end position="167"/>
    </location>
</feature>
<feature type="transmembrane region" description="Helical" evidence="1">
    <location>
        <begin position="186"/>
        <end position="206"/>
    </location>
</feature>
<feature type="transmembrane region" description="Helical" evidence="1">
    <location>
        <begin position="225"/>
        <end position="245"/>
    </location>
</feature>
<feature type="transmembrane region" description="Helical" evidence="1">
    <location>
        <begin position="260"/>
        <end position="280"/>
    </location>
</feature>